<dbReference type="EC" id="3.4.21.62"/>
<dbReference type="PIR" id="A23624">
    <property type="entry name" value="A23624"/>
</dbReference>
<dbReference type="PDB" id="1MEE">
    <property type="method" value="X-ray"/>
    <property type="resolution" value="2.00 A"/>
    <property type="chains" value="A=1-275"/>
</dbReference>
<dbReference type="PDBsum" id="1MEE"/>
<dbReference type="BMRB" id="P07518"/>
<dbReference type="SMR" id="P07518"/>
<dbReference type="MINT" id="P07518"/>
<dbReference type="MEROPS" id="S08.002"/>
<dbReference type="EvolutionaryTrace" id="P07518"/>
<dbReference type="GO" id="GO:0005576">
    <property type="term" value="C:extracellular region"/>
    <property type="evidence" value="ECO:0007669"/>
    <property type="project" value="UniProtKB-SubCell"/>
</dbReference>
<dbReference type="GO" id="GO:0046872">
    <property type="term" value="F:metal ion binding"/>
    <property type="evidence" value="ECO:0007669"/>
    <property type="project" value="UniProtKB-KW"/>
</dbReference>
<dbReference type="GO" id="GO:0004252">
    <property type="term" value="F:serine-type endopeptidase activity"/>
    <property type="evidence" value="ECO:0007669"/>
    <property type="project" value="UniProtKB-EC"/>
</dbReference>
<dbReference type="GO" id="GO:0006508">
    <property type="term" value="P:proteolysis"/>
    <property type="evidence" value="ECO:0007669"/>
    <property type="project" value="UniProtKB-KW"/>
</dbReference>
<dbReference type="GO" id="GO:0030435">
    <property type="term" value="P:sporulation resulting in formation of a cellular spore"/>
    <property type="evidence" value="ECO:0007669"/>
    <property type="project" value="UniProtKB-KW"/>
</dbReference>
<dbReference type="CDD" id="cd07477">
    <property type="entry name" value="Peptidases_S8_Subtilisin_subset"/>
    <property type="match status" value="1"/>
</dbReference>
<dbReference type="FunFam" id="3.40.50.200:FF:000055">
    <property type="entry name" value="Tk-subtilisin"/>
    <property type="match status" value="1"/>
</dbReference>
<dbReference type="Gene3D" id="3.40.50.200">
    <property type="entry name" value="Peptidase S8/S53 domain"/>
    <property type="match status" value="1"/>
</dbReference>
<dbReference type="InterPro" id="IPR000209">
    <property type="entry name" value="Peptidase_S8/S53_dom"/>
</dbReference>
<dbReference type="InterPro" id="IPR036852">
    <property type="entry name" value="Peptidase_S8/S53_dom_sf"/>
</dbReference>
<dbReference type="InterPro" id="IPR023827">
    <property type="entry name" value="Peptidase_S8_Asp-AS"/>
</dbReference>
<dbReference type="InterPro" id="IPR022398">
    <property type="entry name" value="Peptidase_S8_His-AS"/>
</dbReference>
<dbReference type="InterPro" id="IPR023828">
    <property type="entry name" value="Peptidase_S8_Ser-AS"/>
</dbReference>
<dbReference type="InterPro" id="IPR050131">
    <property type="entry name" value="Peptidase_S8_subtilisin-like"/>
</dbReference>
<dbReference type="InterPro" id="IPR015500">
    <property type="entry name" value="Peptidase_S8_subtilisin-rel"/>
</dbReference>
<dbReference type="InterPro" id="IPR034202">
    <property type="entry name" value="Subtilisin_Carlsberg-like"/>
</dbReference>
<dbReference type="PANTHER" id="PTHR43806:SF11">
    <property type="entry name" value="CEREVISIN-RELATED"/>
    <property type="match status" value="1"/>
</dbReference>
<dbReference type="PANTHER" id="PTHR43806">
    <property type="entry name" value="PEPTIDASE S8"/>
    <property type="match status" value="1"/>
</dbReference>
<dbReference type="Pfam" id="PF00082">
    <property type="entry name" value="Peptidase_S8"/>
    <property type="match status" value="1"/>
</dbReference>
<dbReference type="PRINTS" id="PR00723">
    <property type="entry name" value="SUBTILISIN"/>
</dbReference>
<dbReference type="SUPFAM" id="SSF52743">
    <property type="entry name" value="Subtilisin-like"/>
    <property type="match status" value="1"/>
</dbReference>
<dbReference type="PROSITE" id="PS51892">
    <property type="entry name" value="SUBTILASE"/>
    <property type="match status" value="1"/>
</dbReference>
<dbReference type="PROSITE" id="PS00136">
    <property type="entry name" value="SUBTILASE_ASP"/>
    <property type="match status" value="1"/>
</dbReference>
<dbReference type="PROSITE" id="PS00137">
    <property type="entry name" value="SUBTILASE_HIS"/>
    <property type="match status" value="1"/>
</dbReference>
<dbReference type="PROSITE" id="PS00138">
    <property type="entry name" value="SUBTILASE_SER"/>
    <property type="match status" value="1"/>
</dbReference>
<feature type="chain" id="PRO_0000076419" description="Subtilisin">
    <location>
        <begin position="1"/>
        <end position="275"/>
    </location>
</feature>
<feature type="domain" description="Peptidase S8" evidence="1">
    <location>
        <begin position="5"/>
        <end position="274"/>
    </location>
</feature>
<feature type="active site" description="Charge relay system" evidence="1">
    <location>
        <position position="32"/>
    </location>
</feature>
<feature type="active site" description="Charge relay system" evidence="1">
    <location>
        <position position="64"/>
    </location>
</feature>
<feature type="active site" description="Charge relay system" evidence="1">
    <location>
        <position position="221"/>
    </location>
</feature>
<feature type="binding site">
    <location>
        <position position="2"/>
    </location>
    <ligand>
        <name>Ca(2+)</name>
        <dbReference type="ChEBI" id="CHEBI:29108"/>
        <label>1</label>
    </ligand>
</feature>
<feature type="binding site">
    <location>
        <position position="41"/>
    </location>
    <ligand>
        <name>Ca(2+)</name>
        <dbReference type="ChEBI" id="CHEBI:29108"/>
        <label>1</label>
    </ligand>
</feature>
<feature type="binding site">
    <location>
        <position position="75"/>
    </location>
    <ligand>
        <name>Ca(2+)</name>
        <dbReference type="ChEBI" id="CHEBI:29108"/>
        <label>1</label>
    </ligand>
</feature>
<feature type="binding site">
    <location>
        <position position="77"/>
    </location>
    <ligand>
        <name>Ca(2+)</name>
        <dbReference type="ChEBI" id="CHEBI:29108"/>
        <label>1</label>
    </ligand>
</feature>
<feature type="binding site">
    <location>
        <position position="79"/>
    </location>
    <ligand>
        <name>Ca(2+)</name>
        <dbReference type="ChEBI" id="CHEBI:29108"/>
        <label>1</label>
    </ligand>
</feature>
<feature type="binding site">
    <location>
        <position position="81"/>
    </location>
    <ligand>
        <name>Ca(2+)</name>
        <dbReference type="ChEBI" id="CHEBI:29108"/>
        <label>1</label>
    </ligand>
</feature>
<feature type="binding site">
    <location>
        <position position="169"/>
    </location>
    <ligand>
        <name>Ca(2+)</name>
        <dbReference type="ChEBI" id="CHEBI:29108"/>
        <label>2</label>
    </ligand>
</feature>
<feature type="binding site">
    <location>
        <position position="171"/>
    </location>
    <ligand>
        <name>Ca(2+)</name>
        <dbReference type="ChEBI" id="CHEBI:29108"/>
        <label>2</label>
    </ligand>
</feature>
<feature type="binding site">
    <location>
        <position position="174"/>
    </location>
    <ligand>
        <name>Ca(2+)</name>
        <dbReference type="ChEBI" id="CHEBI:29108"/>
        <label>2</label>
    </ligand>
</feature>
<feature type="helix" evidence="3">
    <location>
        <begin position="6"/>
        <end position="10"/>
    </location>
</feature>
<feature type="helix" evidence="3">
    <location>
        <begin position="13"/>
        <end position="19"/>
    </location>
</feature>
<feature type="strand" evidence="3">
    <location>
        <begin position="27"/>
        <end position="33"/>
    </location>
</feature>
<feature type="strand" evidence="3">
    <location>
        <begin position="44"/>
        <end position="49"/>
    </location>
</feature>
<feature type="helix" evidence="3">
    <location>
        <begin position="65"/>
        <end position="73"/>
    </location>
</feature>
<feature type="strand" evidence="3">
    <location>
        <begin position="76"/>
        <end position="80"/>
    </location>
</feature>
<feature type="strand" evidence="3">
    <location>
        <begin position="88"/>
        <end position="94"/>
    </location>
</feature>
<feature type="helix" evidence="3">
    <location>
        <begin position="104"/>
        <end position="116"/>
    </location>
</feature>
<feature type="strand" evidence="3">
    <location>
        <begin position="120"/>
        <end position="124"/>
    </location>
</feature>
<feature type="strand" evidence="3">
    <location>
        <begin position="126"/>
        <end position="130"/>
    </location>
</feature>
<feature type="helix" evidence="3">
    <location>
        <begin position="133"/>
        <end position="144"/>
    </location>
</feature>
<feature type="strand" evidence="3">
    <location>
        <begin position="148"/>
        <end position="152"/>
    </location>
</feature>
<feature type="turn" evidence="3">
    <location>
        <begin position="168"/>
        <end position="170"/>
    </location>
</feature>
<feature type="strand" evidence="3">
    <location>
        <begin position="174"/>
        <end position="180"/>
    </location>
</feature>
<feature type="strand" evidence="3">
    <location>
        <begin position="198"/>
        <end position="201"/>
    </location>
</feature>
<feature type="strand" evidence="3">
    <location>
        <begin position="203"/>
        <end position="209"/>
    </location>
</feature>
<feature type="turn" evidence="3">
    <location>
        <begin position="210"/>
        <end position="212"/>
    </location>
</feature>
<feature type="strand" evidence="3">
    <location>
        <begin position="213"/>
        <end position="217"/>
    </location>
</feature>
<feature type="helix" evidence="3">
    <location>
        <begin position="220"/>
        <end position="237"/>
    </location>
</feature>
<feature type="helix" evidence="3">
    <location>
        <begin position="243"/>
        <end position="252"/>
    </location>
</feature>
<feature type="helix" evidence="3">
    <location>
        <begin position="260"/>
        <end position="263"/>
    </location>
</feature>
<feature type="helix" evidence="3">
    <location>
        <begin position="270"/>
        <end position="273"/>
    </location>
</feature>
<reference key="1">
    <citation type="journal article" date="1986" name="FEBS Lett.">
        <title>Complete amino acid sequence of alkaline mesentericopeptidase: a subtilisin isolated from a strain of Bacillus mesentericus.</title>
        <authorList>
            <person name="Svendsen I."/>
            <person name="Genov N."/>
            <person name="Idakieva K."/>
        </authorList>
    </citation>
    <scope>PROTEIN SEQUENCE</scope>
</reference>
<reference key="2">
    <citation type="journal article" date="1991" name="Acta Crystallogr. B">
        <title>Complex between the subtilisin from a mesophilic bacterium and the leech inhibitor eglin-C.</title>
        <authorList>
            <person name="Dauter Z."/>
            <person name="Betzel C."/>
            <person name="Genov N."/>
            <person name="Pipon N."/>
            <person name="Wilson K.S."/>
        </authorList>
    </citation>
    <scope>X-RAY CRYSTALLOGRAPHY (2.0 ANGSTROMS)</scope>
</reference>
<organism>
    <name type="scientific">Bacillus pumilus</name>
    <name type="common">Bacillus mesentericus</name>
    <dbReference type="NCBI Taxonomy" id="1408"/>
    <lineage>
        <taxon>Bacteria</taxon>
        <taxon>Bacillati</taxon>
        <taxon>Bacillota</taxon>
        <taxon>Bacilli</taxon>
        <taxon>Bacillales</taxon>
        <taxon>Bacillaceae</taxon>
        <taxon>Bacillus</taxon>
    </lineage>
</organism>
<proteinExistence type="evidence at protein level"/>
<gene>
    <name type="primary">apr</name>
</gene>
<protein>
    <recommendedName>
        <fullName>Subtilisin</fullName>
        <ecNumber>3.4.21.62</ecNumber>
    </recommendedName>
    <alternativeName>
        <fullName>Alkaline mesentericopeptidase</fullName>
    </alternativeName>
</protein>
<name>SUBT_BACPU</name>
<keyword id="KW-0002">3D-structure</keyword>
<keyword id="KW-0106">Calcium</keyword>
<keyword id="KW-0903">Direct protein sequencing</keyword>
<keyword id="KW-0378">Hydrolase</keyword>
<keyword id="KW-0479">Metal-binding</keyword>
<keyword id="KW-0645">Protease</keyword>
<keyword id="KW-0964">Secreted</keyword>
<keyword id="KW-0720">Serine protease</keyword>
<keyword id="KW-0749">Sporulation</keyword>
<evidence type="ECO:0000255" key="1">
    <source>
        <dbReference type="PROSITE-ProRule" id="PRU01240"/>
    </source>
</evidence>
<evidence type="ECO:0000305" key="2"/>
<evidence type="ECO:0007829" key="3">
    <source>
        <dbReference type="PDB" id="1MEE"/>
    </source>
</evidence>
<sequence length="275" mass="27656">AQSVPYGISQIKAPALHSQGYTGSNVKVAVIDSGIDSSHPDLNVRGGASFVPSETNPYQDGSSHGTHVAGTIAALNNSIGVLGVAPSSALYAVKVLDSTGSGQYSWIINGIEWAISNNMDVINMSLGGPTGSTALKTVVDKAVSSGIVVAAAAGNEGSSGSTSTVGYPAKYPSTIAVGAVNSANQRASFSSAGSELDVMAPGVSIQSTLPGGTYGAYNGTSMATPHVAGAAALILSKHPTWTNAQVRDRLESTATYLGSSFYYGKGLINVQAAAQ</sequence>
<accession>P07518</accession>
<comment type="function">
    <text>Subtilisin is an extracellular alkaline serine protease, it catalyzes the hydrolysis of proteins and peptide amides.</text>
</comment>
<comment type="catalytic activity">
    <reaction>
        <text>Hydrolysis of proteins with broad specificity for peptide bonds, and a preference for a large uncharged residue in P1. Hydrolyzes peptide amides.</text>
        <dbReference type="EC" id="3.4.21.62"/>
    </reaction>
</comment>
<comment type="cofactor">
    <cofactor>
        <name>Ca(2+)</name>
        <dbReference type="ChEBI" id="CHEBI:29108"/>
    </cofactor>
    <text>Binds 2 calcium ions per subunit.</text>
</comment>
<comment type="subcellular location">
    <subcellularLocation>
        <location>Secreted</location>
    </subcellularLocation>
</comment>
<comment type="miscellaneous">
    <text>Secretion of subtilisin is associated with onset of sporulation, and many mutations which block sporulation at early stages affect expression levels of subtilisin. However, subtilisin is not necessary for normal sporulation.</text>
</comment>
<comment type="similarity">
    <text evidence="2">Belongs to the peptidase S8 family.</text>
</comment>